<accession>Q6GJ92</accession>
<name>VRAC_STAAR</name>
<sequence length="121" mass="14156">MQHYLLDSNQRLNVSFSKDSVAAYYHCFNQPYSKEVPPLMCASLWSKFDLFKKYANSELILTKSVINQTQKIKVDTIYVGHLEDIECRQIRNITRYTMALTLTKNDQHVITVTQTFIKAMK</sequence>
<dbReference type="EMBL" id="BX571856">
    <property type="protein sequence ID" value="CAG39602.1"/>
    <property type="molecule type" value="Genomic_DNA"/>
</dbReference>
<dbReference type="RefSeq" id="WP_001165054.1">
    <property type="nucleotide sequence ID" value="NC_002952.2"/>
</dbReference>
<dbReference type="SMR" id="Q6GJ92"/>
<dbReference type="KEGG" id="sar:SAR0582"/>
<dbReference type="HOGENOM" id="CLU_2195295_0_0_9"/>
<dbReference type="Proteomes" id="UP000000596">
    <property type="component" value="Chromosome"/>
</dbReference>
<dbReference type="InterPro" id="IPR016994">
    <property type="entry name" value="UCP032370_VraC"/>
</dbReference>
<dbReference type="PIRSF" id="PIRSF032370">
    <property type="entry name" value="UCP032370_VraC"/>
    <property type="match status" value="1"/>
</dbReference>
<feature type="chain" id="PRO_0000065913" description="Protein VraC">
    <location>
        <begin position="1"/>
        <end position="121"/>
    </location>
</feature>
<protein>
    <recommendedName>
        <fullName>Protein VraC</fullName>
    </recommendedName>
</protein>
<reference key="1">
    <citation type="journal article" date="2004" name="Proc. Natl. Acad. Sci. U.S.A.">
        <title>Complete genomes of two clinical Staphylococcus aureus strains: evidence for the rapid evolution of virulence and drug resistance.</title>
        <authorList>
            <person name="Holden M.T.G."/>
            <person name="Feil E.J."/>
            <person name="Lindsay J.A."/>
            <person name="Peacock S.J."/>
            <person name="Day N.P.J."/>
            <person name="Enright M.C."/>
            <person name="Foster T.J."/>
            <person name="Moore C.E."/>
            <person name="Hurst L."/>
            <person name="Atkin R."/>
            <person name="Barron A."/>
            <person name="Bason N."/>
            <person name="Bentley S.D."/>
            <person name="Chillingworth C."/>
            <person name="Chillingworth T."/>
            <person name="Churcher C."/>
            <person name="Clark L."/>
            <person name="Corton C."/>
            <person name="Cronin A."/>
            <person name="Doggett J."/>
            <person name="Dowd L."/>
            <person name="Feltwell T."/>
            <person name="Hance Z."/>
            <person name="Harris B."/>
            <person name="Hauser H."/>
            <person name="Holroyd S."/>
            <person name="Jagels K."/>
            <person name="James K.D."/>
            <person name="Lennard N."/>
            <person name="Line A."/>
            <person name="Mayes R."/>
            <person name="Moule S."/>
            <person name="Mungall K."/>
            <person name="Ormond D."/>
            <person name="Quail M.A."/>
            <person name="Rabbinowitsch E."/>
            <person name="Rutherford K.M."/>
            <person name="Sanders M."/>
            <person name="Sharp S."/>
            <person name="Simmonds M."/>
            <person name="Stevens K."/>
            <person name="Whitehead S."/>
            <person name="Barrell B.G."/>
            <person name="Spratt B.G."/>
            <person name="Parkhill J."/>
        </authorList>
    </citation>
    <scope>NUCLEOTIDE SEQUENCE [LARGE SCALE GENOMIC DNA]</scope>
    <source>
        <strain>MRSA252</strain>
    </source>
</reference>
<gene>
    <name type="primary">vraC</name>
    <name type="ordered locus">SAR0582</name>
</gene>
<proteinExistence type="predicted"/>
<organism>
    <name type="scientific">Staphylococcus aureus (strain MRSA252)</name>
    <dbReference type="NCBI Taxonomy" id="282458"/>
    <lineage>
        <taxon>Bacteria</taxon>
        <taxon>Bacillati</taxon>
        <taxon>Bacillota</taxon>
        <taxon>Bacilli</taxon>
        <taxon>Bacillales</taxon>
        <taxon>Staphylococcaceae</taxon>
        <taxon>Staphylococcus</taxon>
    </lineage>
</organism>